<sequence length="130" mass="14788">MVQDRFYATGKRKNAIARVWLTPGTGKVIVNKMATTEYFGKIFKEHLIEKPFKTTDTFEKYDVIATLKGGGKSAQVDALAHGISRALLETDPENRTPLKQAGLLRRDQRVKERKKYGQKGARAKFQFSKR</sequence>
<name>RS9_DESPS</name>
<feature type="chain" id="PRO_1000081816" description="Small ribosomal subunit protein uS9">
    <location>
        <begin position="1"/>
        <end position="130"/>
    </location>
</feature>
<feature type="region of interest" description="Disordered" evidence="2">
    <location>
        <begin position="109"/>
        <end position="130"/>
    </location>
</feature>
<keyword id="KW-1185">Reference proteome</keyword>
<keyword id="KW-0687">Ribonucleoprotein</keyword>
<keyword id="KW-0689">Ribosomal protein</keyword>
<comment type="similarity">
    <text evidence="1">Belongs to the universal ribosomal protein uS9 family.</text>
</comment>
<evidence type="ECO:0000255" key="1">
    <source>
        <dbReference type="HAMAP-Rule" id="MF_00532"/>
    </source>
</evidence>
<evidence type="ECO:0000256" key="2">
    <source>
        <dbReference type="SAM" id="MobiDB-lite"/>
    </source>
</evidence>
<evidence type="ECO:0000305" key="3"/>
<accession>Q6ANL9</accession>
<gene>
    <name evidence="1" type="primary">rpsI</name>
    <name type="ordered locus">DP1326</name>
</gene>
<organism>
    <name type="scientific">Desulfotalea psychrophila (strain LSv54 / DSM 12343)</name>
    <dbReference type="NCBI Taxonomy" id="177439"/>
    <lineage>
        <taxon>Bacteria</taxon>
        <taxon>Pseudomonadati</taxon>
        <taxon>Thermodesulfobacteriota</taxon>
        <taxon>Desulfobulbia</taxon>
        <taxon>Desulfobulbales</taxon>
        <taxon>Desulfocapsaceae</taxon>
        <taxon>Desulfotalea</taxon>
    </lineage>
</organism>
<reference key="1">
    <citation type="journal article" date="2004" name="Environ. Microbiol.">
        <title>The genome of Desulfotalea psychrophila, a sulfate-reducing bacterium from permanently cold Arctic sediments.</title>
        <authorList>
            <person name="Rabus R."/>
            <person name="Ruepp A."/>
            <person name="Frickey T."/>
            <person name="Rattei T."/>
            <person name="Fartmann B."/>
            <person name="Stark M."/>
            <person name="Bauer M."/>
            <person name="Zibat A."/>
            <person name="Lombardot T."/>
            <person name="Becker I."/>
            <person name="Amann J."/>
            <person name="Gellner K."/>
            <person name="Teeling H."/>
            <person name="Leuschner W.D."/>
            <person name="Gloeckner F.-O."/>
            <person name="Lupas A.N."/>
            <person name="Amann R."/>
            <person name="Klenk H.-P."/>
        </authorList>
    </citation>
    <scope>NUCLEOTIDE SEQUENCE [LARGE SCALE GENOMIC DNA]</scope>
    <source>
        <strain>DSM 12343 / LSv54</strain>
    </source>
</reference>
<protein>
    <recommendedName>
        <fullName evidence="1">Small ribosomal subunit protein uS9</fullName>
    </recommendedName>
    <alternativeName>
        <fullName evidence="3">30S ribosomal protein S9</fullName>
    </alternativeName>
</protein>
<dbReference type="EMBL" id="CR522870">
    <property type="protein sequence ID" value="CAG36055.1"/>
    <property type="molecule type" value="Genomic_DNA"/>
</dbReference>
<dbReference type="RefSeq" id="WP_011188567.1">
    <property type="nucleotide sequence ID" value="NC_006138.1"/>
</dbReference>
<dbReference type="SMR" id="Q6ANL9"/>
<dbReference type="STRING" id="177439.DP1326"/>
<dbReference type="KEGG" id="dps:DP1326"/>
<dbReference type="eggNOG" id="COG0103">
    <property type="taxonomic scope" value="Bacteria"/>
</dbReference>
<dbReference type="HOGENOM" id="CLU_046483_2_1_7"/>
<dbReference type="OrthoDB" id="9803965at2"/>
<dbReference type="Proteomes" id="UP000000602">
    <property type="component" value="Chromosome"/>
</dbReference>
<dbReference type="GO" id="GO:0022627">
    <property type="term" value="C:cytosolic small ribosomal subunit"/>
    <property type="evidence" value="ECO:0007669"/>
    <property type="project" value="TreeGrafter"/>
</dbReference>
<dbReference type="GO" id="GO:0003723">
    <property type="term" value="F:RNA binding"/>
    <property type="evidence" value="ECO:0007669"/>
    <property type="project" value="TreeGrafter"/>
</dbReference>
<dbReference type="GO" id="GO:0003735">
    <property type="term" value="F:structural constituent of ribosome"/>
    <property type="evidence" value="ECO:0007669"/>
    <property type="project" value="InterPro"/>
</dbReference>
<dbReference type="GO" id="GO:0006412">
    <property type="term" value="P:translation"/>
    <property type="evidence" value="ECO:0007669"/>
    <property type="project" value="UniProtKB-UniRule"/>
</dbReference>
<dbReference type="FunFam" id="3.30.230.10:FF:000001">
    <property type="entry name" value="30S ribosomal protein S9"/>
    <property type="match status" value="1"/>
</dbReference>
<dbReference type="Gene3D" id="3.30.230.10">
    <property type="match status" value="1"/>
</dbReference>
<dbReference type="HAMAP" id="MF_00532_B">
    <property type="entry name" value="Ribosomal_uS9_B"/>
    <property type="match status" value="1"/>
</dbReference>
<dbReference type="InterPro" id="IPR020568">
    <property type="entry name" value="Ribosomal_Su5_D2-typ_SF"/>
</dbReference>
<dbReference type="InterPro" id="IPR000754">
    <property type="entry name" value="Ribosomal_uS9"/>
</dbReference>
<dbReference type="InterPro" id="IPR023035">
    <property type="entry name" value="Ribosomal_uS9_bac/plastid"/>
</dbReference>
<dbReference type="InterPro" id="IPR020574">
    <property type="entry name" value="Ribosomal_uS9_CS"/>
</dbReference>
<dbReference type="InterPro" id="IPR014721">
    <property type="entry name" value="Ribsml_uS5_D2-typ_fold_subgr"/>
</dbReference>
<dbReference type="NCBIfam" id="NF001099">
    <property type="entry name" value="PRK00132.1"/>
    <property type="match status" value="1"/>
</dbReference>
<dbReference type="PANTHER" id="PTHR21569">
    <property type="entry name" value="RIBOSOMAL PROTEIN S9"/>
    <property type="match status" value="1"/>
</dbReference>
<dbReference type="PANTHER" id="PTHR21569:SF1">
    <property type="entry name" value="SMALL RIBOSOMAL SUBUNIT PROTEIN US9M"/>
    <property type="match status" value="1"/>
</dbReference>
<dbReference type="Pfam" id="PF00380">
    <property type="entry name" value="Ribosomal_S9"/>
    <property type="match status" value="1"/>
</dbReference>
<dbReference type="SUPFAM" id="SSF54211">
    <property type="entry name" value="Ribosomal protein S5 domain 2-like"/>
    <property type="match status" value="1"/>
</dbReference>
<dbReference type="PROSITE" id="PS00360">
    <property type="entry name" value="RIBOSOMAL_S9"/>
    <property type="match status" value="1"/>
</dbReference>
<proteinExistence type="inferred from homology"/>